<accession>P57684</accession>
<gene>
    <name evidence="1" type="primary">kdpA</name>
    <name type="ordered locus">VNG_6176G</name>
</gene>
<name>KDPA_HALSA</name>
<evidence type="ECO:0000255" key="1">
    <source>
        <dbReference type="HAMAP-Rule" id="MF_00275"/>
    </source>
</evidence>
<keyword id="KW-1003">Cell membrane</keyword>
<keyword id="KW-0406">Ion transport</keyword>
<keyword id="KW-0472">Membrane</keyword>
<keyword id="KW-0614">Plasmid</keyword>
<keyword id="KW-0630">Potassium</keyword>
<keyword id="KW-0633">Potassium transport</keyword>
<keyword id="KW-1185">Reference proteome</keyword>
<keyword id="KW-0812">Transmembrane</keyword>
<keyword id="KW-1133">Transmembrane helix</keyword>
<keyword id="KW-0813">Transport</keyword>
<reference key="1">
    <citation type="journal article" date="2000" name="Proc. Natl. Acad. Sci. U.S.A.">
        <title>Genome sequence of Halobacterium species NRC-1.</title>
        <authorList>
            <person name="Ng W.V."/>
            <person name="Kennedy S.P."/>
            <person name="Mahairas G.G."/>
            <person name="Berquist B."/>
            <person name="Pan M."/>
            <person name="Shukla H.D."/>
            <person name="Lasky S.R."/>
            <person name="Baliga N.S."/>
            <person name="Thorsson V."/>
            <person name="Sbrogna J."/>
            <person name="Swartzell S."/>
            <person name="Weir D."/>
            <person name="Hall J."/>
            <person name="Dahl T.A."/>
            <person name="Welti R."/>
            <person name="Goo Y.A."/>
            <person name="Leithauser B."/>
            <person name="Keller K."/>
            <person name="Cruz R."/>
            <person name="Danson M.J."/>
            <person name="Hough D.W."/>
            <person name="Maddocks D.G."/>
            <person name="Jablonski P.E."/>
            <person name="Krebs M.P."/>
            <person name="Angevine C.M."/>
            <person name="Dale H."/>
            <person name="Isenbarger T.A."/>
            <person name="Peck R.F."/>
            <person name="Pohlschroder M."/>
            <person name="Spudich J.L."/>
            <person name="Jung K.-H."/>
            <person name="Alam M."/>
            <person name="Freitas T."/>
            <person name="Hou S."/>
            <person name="Daniels C.J."/>
            <person name="Dennis P.P."/>
            <person name="Omer A.D."/>
            <person name="Ebhardt H."/>
            <person name="Lowe T.M."/>
            <person name="Liang P."/>
            <person name="Riley M."/>
            <person name="Hood L."/>
            <person name="DasSarma S."/>
        </authorList>
    </citation>
    <scope>NUCLEOTIDE SEQUENCE [LARGE SCALE GENOMIC DNA]</scope>
    <source>
        <strain>ATCC 700922 / JCM 11081 / NRC-1</strain>
    </source>
</reference>
<protein>
    <recommendedName>
        <fullName evidence="1">Potassium-transporting ATPase potassium-binding subunit</fullName>
    </recommendedName>
    <alternativeName>
        <fullName evidence="1">ATP phosphohydrolase [potassium-transporting] A chain</fullName>
    </alternativeName>
    <alternativeName>
        <fullName evidence="1">Potassium-binding and translocating subunit A</fullName>
    </alternativeName>
    <alternativeName>
        <fullName evidence="1">Potassium-translocating ATPase A chain</fullName>
    </alternativeName>
</protein>
<sequence>MASPPPIVEYAVFFTILAVLVFVAGEYLAWVYREQANSDHRPPGYLSWFERLDEIFTPIENGLYRLSGINPRREMTWKGYLKAVLVFNVCIWVLLFVVLMFQDALPMNFVGVGGESWDLAFHTASSFTSNTNQQHYSGETLSVFTHTFGIGIAMFLTPATGLALMPAFARAFTNKEDPRLGNFYENVVRGLVRFLLPISLLIAIILMAEGSVQTILGGQLTANTFTMGIQNIRIGPHAGIEAIKMFGTNGGGINAANAATAFENPTPLSNLVLTLAMPIGTFSAIYAWGAWVGNRSHGVAIVAAFFVIYMALTGVAVVGETGTNAGMVVTGNGLHVDQTVGNMEGKETRFGPTASAIWGLSTTGTTNGGVNSMHNSWTALGAFSLLFAFATNNISNGVGTGLLNILMFVILTAFIGALMIGRRPQYLGKKLEWQEMRYVFVVILVLPILVLIPQAAAVVYQGAIDSMNNPGFRGFSEVLYEFFSASANNGSGFEGLGDGTLFFNLVNGVQVLLARYVPITAQLAIAGYLANKKVSPESKGSLDTDTPAFVGLLIGVIIIVSALVFLPALVFGPIGELLSGGI</sequence>
<proteinExistence type="inferred from homology"/>
<comment type="function">
    <text evidence="1">Part of the high-affinity ATP-driven potassium transport (or Kdp) system, which catalyzes the hydrolysis of ATP coupled with the electrogenic transport of potassium into the cytoplasm. This subunit binds the extracellular potassium ions and delivers the ions to the membrane domain of KdpB through an intramembrane tunnel.</text>
</comment>
<comment type="subunit">
    <text evidence="1">The system is composed of three essential subunits: KdpA, KdpB and KdpC.</text>
</comment>
<comment type="subcellular location">
    <subcellularLocation>
        <location evidence="1">Cell membrane</location>
        <topology evidence="1">Multi-pass membrane protein</topology>
    </subcellularLocation>
</comment>
<comment type="similarity">
    <text evidence="1">Belongs to the KdpA family.</text>
</comment>
<geneLocation type="plasmid">
    <name>pNRC200</name>
</geneLocation>
<feature type="chain" id="PRO_0000166541" description="Potassium-transporting ATPase potassium-binding subunit">
    <location>
        <begin position="1"/>
        <end position="582"/>
    </location>
</feature>
<feature type="transmembrane region" description="Helical" evidence="1">
    <location>
        <begin position="11"/>
        <end position="31"/>
    </location>
</feature>
<feature type="transmembrane region" description="Helical" evidence="1">
    <location>
        <begin position="81"/>
        <end position="101"/>
    </location>
</feature>
<feature type="transmembrane region" description="Helical" evidence="1">
    <location>
        <begin position="148"/>
        <end position="168"/>
    </location>
</feature>
<feature type="transmembrane region" description="Helical" evidence="1">
    <location>
        <begin position="195"/>
        <end position="215"/>
    </location>
</feature>
<feature type="transmembrane region" description="Helical" evidence="1">
    <location>
        <begin position="272"/>
        <end position="292"/>
    </location>
</feature>
<feature type="transmembrane region" description="Helical" evidence="1">
    <location>
        <begin position="298"/>
        <end position="318"/>
    </location>
</feature>
<feature type="transmembrane region" description="Helical" evidence="1">
    <location>
        <begin position="379"/>
        <end position="399"/>
    </location>
</feature>
<feature type="transmembrane region" description="Helical" evidence="1">
    <location>
        <begin position="401"/>
        <end position="421"/>
    </location>
</feature>
<feature type="transmembrane region" description="Helical" evidence="1">
    <location>
        <begin position="439"/>
        <end position="459"/>
    </location>
</feature>
<feature type="transmembrane region" description="Helical" evidence="1">
    <location>
        <begin position="551"/>
        <end position="571"/>
    </location>
</feature>
<organism>
    <name type="scientific">Halobacterium salinarum (strain ATCC 700922 / JCM 11081 / NRC-1)</name>
    <name type="common">Halobacterium halobium</name>
    <dbReference type="NCBI Taxonomy" id="64091"/>
    <lineage>
        <taxon>Archaea</taxon>
        <taxon>Methanobacteriati</taxon>
        <taxon>Methanobacteriota</taxon>
        <taxon>Stenosarchaea group</taxon>
        <taxon>Halobacteria</taxon>
        <taxon>Halobacteriales</taxon>
        <taxon>Halobacteriaceae</taxon>
        <taxon>Halobacterium</taxon>
        <taxon>Halobacterium salinarum NRC-34001</taxon>
    </lineage>
</organism>
<dbReference type="EMBL" id="AE004438">
    <property type="protein sequence ID" value="AAG20843.1"/>
    <property type="molecule type" value="Genomic_DNA"/>
</dbReference>
<dbReference type="RefSeq" id="WP_010904056.1">
    <property type="nucleotide sequence ID" value="NZ_BK010831.1"/>
</dbReference>
<dbReference type="SMR" id="P57684"/>
<dbReference type="GeneID" id="89343621"/>
<dbReference type="KEGG" id="hal:VNG_6176G"/>
<dbReference type="PATRIC" id="fig|64091.14.peg.2200"/>
<dbReference type="HOGENOM" id="CLU_018614_3_0_2"/>
<dbReference type="InParanoid" id="P57684"/>
<dbReference type="OrthoDB" id="56688at2157"/>
<dbReference type="PhylomeDB" id="P57684"/>
<dbReference type="Proteomes" id="UP000000554">
    <property type="component" value="Plasmid pNRC200"/>
</dbReference>
<dbReference type="GO" id="GO:0005886">
    <property type="term" value="C:plasma membrane"/>
    <property type="evidence" value="ECO:0000318"/>
    <property type="project" value="GO_Central"/>
</dbReference>
<dbReference type="GO" id="GO:0008556">
    <property type="term" value="F:P-type potassium transmembrane transporter activity"/>
    <property type="evidence" value="ECO:0000318"/>
    <property type="project" value="GO_Central"/>
</dbReference>
<dbReference type="GO" id="GO:0030955">
    <property type="term" value="F:potassium ion binding"/>
    <property type="evidence" value="ECO:0007669"/>
    <property type="project" value="UniProtKB-UniRule"/>
</dbReference>
<dbReference type="GO" id="GO:0071805">
    <property type="term" value="P:potassium ion transmembrane transport"/>
    <property type="evidence" value="ECO:0000318"/>
    <property type="project" value="GO_Central"/>
</dbReference>
<dbReference type="HAMAP" id="MF_00275">
    <property type="entry name" value="KdpA"/>
    <property type="match status" value="1"/>
</dbReference>
<dbReference type="InterPro" id="IPR004623">
    <property type="entry name" value="KdpA"/>
</dbReference>
<dbReference type="NCBIfam" id="TIGR00680">
    <property type="entry name" value="kdpA"/>
    <property type="match status" value="1"/>
</dbReference>
<dbReference type="PANTHER" id="PTHR30607">
    <property type="entry name" value="POTASSIUM-TRANSPORTING ATPASE A CHAIN"/>
    <property type="match status" value="1"/>
</dbReference>
<dbReference type="PANTHER" id="PTHR30607:SF2">
    <property type="entry name" value="POTASSIUM-TRANSPORTING ATPASE POTASSIUM-BINDING SUBUNIT"/>
    <property type="match status" value="1"/>
</dbReference>
<dbReference type="Pfam" id="PF03814">
    <property type="entry name" value="KdpA"/>
    <property type="match status" value="1"/>
</dbReference>
<dbReference type="PIRSF" id="PIRSF001294">
    <property type="entry name" value="K_ATPaseA"/>
    <property type="match status" value="1"/>
</dbReference>